<reference key="1">
    <citation type="journal article" date="1995" name="Mech. Dev.">
        <title>The extra sex combs protein is highly conserved between Drosophila virilis and Drosophila melanogaster.</title>
        <authorList>
            <person name="Sathe S.S."/>
            <person name="Harte P.J."/>
        </authorList>
    </citation>
    <scope>NUCLEOTIDE SEQUENCE [GENOMIC DNA]</scope>
</reference>
<evidence type="ECO:0000250" key="1"/>
<evidence type="ECO:0000256" key="2">
    <source>
        <dbReference type="SAM" id="MobiDB-lite"/>
    </source>
</evidence>
<evidence type="ECO:0000305" key="3"/>
<dbReference type="EMBL" id="S80985">
    <property type="protein sequence ID" value="AAB35874.2"/>
    <property type="molecule type" value="Genomic_DNA"/>
</dbReference>
<dbReference type="EMBL" id="S80982">
    <property type="protein sequence ID" value="AAB35874.2"/>
    <property type="status" value="JOINED"/>
    <property type="molecule type" value="Genomic_DNA"/>
</dbReference>
<dbReference type="EMBL" id="S80983">
    <property type="protein sequence ID" value="AAB35874.2"/>
    <property type="status" value="JOINED"/>
    <property type="molecule type" value="Genomic_DNA"/>
</dbReference>
<dbReference type="EMBL" id="S80984">
    <property type="protein sequence ID" value="AAB35874.2"/>
    <property type="status" value="JOINED"/>
    <property type="molecule type" value="Genomic_DNA"/>
</dbReference>
<dbReference type="SMR" id="Q26458"/>
<dbReference type="eggNOG" id="KOG1034">
    <property type="taxonomic scope" value="Eukaryota"/>
</dbReference>
<dbReference type="OrthoDB" id="7318948at2759"/>
<dbReference type="GO" id="GO:0000785">
    <property type="term" value="C:chromatin"/>
    <property type="evidence" value="ECO:0000250"/>
    <property type="project" value="UniProtKB"/>
</dbReference>
<dbReference type="GO" id="GO:0035098">
    <property type="term" value="C:ESC/E(Z) complex"/>
    <property type="evidence" value="ECO:0007669"/>
    <property type="project" value="EnsemblMetazoa"/>
</dbReference>
<dbReference type="GO" id="GO:0005634">
    <property type="term" value="C:nucleus"/>
    <property type="evidence" value="ECO:0000314"/>
    <property type="project" value="UniProtKB"/>
</dbReference>
<dbReference type="GO" id="GO:0005700">
    <property type="term" value="C:polytene chromosome"/>
    <property type="evidence" value="ECO:0007669"/>
    <property type="project" value="EnsemblMetazoa"/>
</dbReference>
<dbReference type="GO" id="GO:0008047">
    <property type="term" value="F:enzyme activator activity"/>
    <property type="evidence" value="ECO:0007669"/>
    <property type="project" value="EnsemblMetazoa"/>
</dbReference>
<dbReference type="GO" id="GO:0042802">
    <property type="term" value="F:identical protein binding"/>
    <property type="evidence" value="ECO:0007669"/>
    <property type="project" value="EnsemblMetazoa"/>
</dbReference>
<dbReference type="GO" id="GO:0031491">
    <property type="term" value="F:nucleosome binding"/>
    <property type="evidence" value="ECO:0007669"/>
    <property type="project" value="EnsemblMetazoa"/>
</dbReference>
<dbReference type="GO" id="GO:0009948">
    <property type="term" value="P:anterior/posterior axis specification"/>
    <property type="evidence" value="ECO:0007669"/>
    <property type="project" value="EnsemblMetazoa"/>
</dbReference>
<dbReference type="GO" id="GO:0140718">
    <property type="term" value="P:facultative heterochromatin formation"/>
    <property type="evidence" value="ECO:0007669"/>
    <property type="project" value="EnsemblMetazoa"/>
</dbReference>
<dbReference type="GO" id="GO:0006357">
    <property type="term" value="P:regulation of transcription by RNA polymerase II"/>
    <property type="evidence" value="ECO:0007669"/>
    <property type="project" value="EnsemblMetazoa"/>
</dbReference>
<dbReference type="GO" id="GO:0045815">
    <property type="term" value="P:transcription initiation-coupled chromatin remodeling"/>
    <property type="evidence" value="ECO:0000250"/>
    <property type="project" value="UniProtKB"/>
</dbReference>
<dbReference type="FunFam" id="2.130.10.10:FF:000056">
    <property type="entry name" value="Polycomb protein eed"/>
    <property type="match status" value="1"/>
</dbReference>
<dbReference type="Gene3D" id="2.130.10.10">
    <property type="entry name" value="YVTN repeat-like/Quinoprotein amine dehydrogenase"/>
    <property type="match status" value="1"/>
</dbReference>
<dbReference type="InterPro" id="IPR051243">
    <property type="entry name" value="PcG_WD-repeat"/>
</dbReference>
<dbReference type="InterPro" id="IPR015943">
    <property type="entry name" value="WD40/YVTN_repeat-like_dom_sf"/>
</dbReference>
<dbReference type="InterPro" id="IPR019775">
    <property type="entry name" value="WD40_repeat_CS"/>
</dbReference>
<dbReference type="InterPro" id="IPR036322">
    <property type="entry name" value="WD40_repeat_dom_sf"/>
</dbReference>
<dbReference type="InterPro" id="IPR001680">
    <property type="entry name" value="WD40_rpt"/>
</dbReference>
<dbReference type="PANTHER" id="PTHR10253">
    <property type="entry name" value="POLYCOMB PROTEIN"/>
    <property type="match status" value="1"/>
</dbReference>
<dbReference type="Pfam" id="PF00400">
    <property type="entry name" value="WD40"/>
    <property type="match status" value="2"/>
</dbReference>
<dbReference type="SMART" id="SM00320">
    <property type="entry name" value="WD40"/>
    <property type="match status" value="5"/>
</dbReference>
<dbReference type="SUPFAM" id="SSF50978">
    <property type="entry name" value="WD40 repeat-like"/>
    <property type="match status" value="1"/>
</dbReference>
<dbReference type="PROSITE" id="PS00678">
    <property type="entry name" value="WD_REPEATS_1"/>
    <property type="match status" value="1"/>
</dbReference>
<dbReference type="PROSITE" id="PS50082">
    <property type="entry name" value="WD_REPEATS_2"/>
    <property type="match status" value="2"/>
</dbReference>
<dbReference type="PROSITE" id="PS50294">
    <property type="entry name" value="WD_REPEATS_REGION"/>
    <property type="match status" value="1"/>
</dbReference>
<keyword id="KW-0217">Developmental protein</keyword>
<keyword id="KW-0539">Nucleus</keyword>
<keyword id="KW-0597">Phosphoprotein</keyword>
<keyword id="KW-0677">Repeat</keyword>
<keyword id="KW-0678">Repressor</keyword>
<keyword id="KW-0804">Transcription</keyword>
<keyword id="KW-0805">Transcription regulation</keyword>
<keyword id="KW-0853">WD repeat</keyword>
<gene>
    <name type="primary">esc</name>
</gene>
<accession>Q26458</accession>
<proteinExistence type="inferred from homology"/>
<organism>
    <name type="scientific">Drosophila virilis</name>
    <name type="common">Fruit fly</name>
    <dbReference type="NCBI Taxonomy" id="7244"/>
    <lineage>
        <taxon>Eukaryota</taxon>
        <taxon>Metazoa</taxon>
        <taxon>Ecdysozoa</taxon>
        <taxon>Arthropoda</taxon>
        <taxon>Hexapoda</taxon>
        <taxon>Insecta</taxon>
        <taxon>Pterygota</taxon>
        <taxon>Neoptera</taxon>
        <taxon>Endopterygota</taxon>
        <taxon>Diptera</taxon>
        <taxon>Brachycera</taxon>
        <taxon>Muscomorpha</taxon>
        <taxon>Ephydroidea</taxon>
        <taxon>Drosophilidae</taxon>
        <taxon>Drosophila</taxon>
    </lineage>
</organism>
<sequence length="425" mass="48043">MSSEKVKNDNEPDDTDDSCGDESASFTTNSTTSRSKSPASSTRSKRRGRRSHKSKPKSGAAYKYDTHVKENHGANIFGVSFNTLLGKDEPQVFATAGSNRCTVYECPRKGGLTLLHCYADPDPDEVFYTCAWSYDLKTSAPLLAAAGYRGVIRVIDIEQNEAVDNYIGHGQAINELKFHPHKLQLLLSGSKDHAIRLWNIQTHVCIAIFGGVEGHRDEVLSIDFNMRGDRIVSSGMDHSLKLWCLNTQEFQHKIELSQTFSQEKSTLPFPTITKHFPDFSTRDIHRNYVDCVQWFGNFVLSKSCENAIVCWKPGQLHQSFEQLKPSDSSCTIIAEFEYDECEIWFVRFGFNPWQKVIALGNQQGKVYVWEMDPSDPEGAHMTTLHNLRSVATVRQIAFSRDASVLVYVCDDATVWRWNRRHAAAI</sequence>
<name>ESC_DROVI</name>
<protein>
    <recommendedName>
        <fullName>Polycomb protein esc</fullName>
    </recommendedName>
    <alternativeName>
        <fullName>Protein extra sex combs</fullName>
    </alternativeName>
</protein>
<comment type="function">
    <text evidence="1">Polycomb group (PcG) protein. In contrast to other PcG protein, it is specifically required during the first 6 hours of embryogenesis to establish PcG silencing. PcG proteins act by forming multiprotein complexes, which are required to maintain the transcriptionally repressive state of homeotic genes throughout development. PcG proteins are not required to initiate repression, but to maintain it during later stages of development. They probably act via a methylation of histones, rendering chromatin heritably changed in its expressibility. Component of the Esc/E(z) complex, which methylates 'Lys-9' and 'Lys-27' residues of histone H3. The Esc/E(z) complex is necessary but not sufficient to recruit a functional PcG repressive complex that represses target genes, suggesting that the recruitment of the distinct PRC1 complex is also required to allow a subsequent repression (By similarity).</text>
</comment>
<comment type="subunit">
    <text evidence="1">Component of the Esc/E(z) complex, composed of Esc, E(z), Su(z)12, HDAC1/Rpd3, Caf1 and probably Pho. This complex is distinct from the PRC1 complex, which contains many other PcG proteins like Pc, Ph, Psc, Su(z)2. The two complexes however cooperate and interact together during the first 3 hours of development to establish PcG silencing (By similarity).</text>
</comment>
<comment type="subcellular location">
    <subcellularLocation>
        <location evidence="3">Nucleus</location>
    </subcellularLocation>
</comment>
<comment type="PTM">
    <text evidence="1">Phosphorylated.</text>
</comment>
<comment type="similarity">
    <text evidence="3">Belongs to the WD repeat ESC family.</text>
</comment>
<feature type="chain" id="PRO_0000050973" description="Polycomb protein esc">
    <location>
        <begin position="1"/>
        <end position="425"/>
    </location>
</feature>
<feature type="repeat" description="WD 1">
    <location>
        <begin position="71"/>
        <end position="116"/>
    </location>
</feature>
<feature type="repeat" description="WD 2">
    <location>
        <begin position="126"/>
        <end position="165"/>
    </location>
</feature>
<feature type="repeat" description="WD 3">
    <location>
        <begin position="168"/>
        <end position="208"/>
    </location>
</feature>
<feature type="repeat" description="WD 4">
    <location>
        <begin position="214"/>
        <end position="253"/>
    </location>
</feature>
<feature type="repeat" description="WD 5">
    <location>
        <begin position="284"/>
        <end position="321"/>
    </location>
</feature>
<feature type="repeat" description="WD 6">
    <location>
        <begin position="340"/>
        <end position="379"/>
    </location>
</feature>
<feature type="repeat" description="WD 7">
    <location>
        <begin position="388"/>
        <end position="424"/>
    </location>
</feature>
<feature type="region of interest" description="Disordered" evidence="2">
    <location>
        <begin position="1"/>
        <end position="64"/>
    </location>
</feature>
<feature type="compositionally biased region" description="Basic and acidic residues" evidence="2">
    <location>
        <begin position="1"/>
        <end position="10"/>
    </location>
</feature>
<feature type="compositionally biased region" description="Acidic residues" evidence="2">
    <location>
        <begin position="11"/>
        <end position="20"/>
    </location>
</feature>
<feature type="compositionally biased region" description="Low complexity" evidence="2">
    <location>
        <begin position="30"/>
        <end position="42"/>
    </location>
</feature>
<feature type="compositionally biased region" description="Basic residues" evidence="2">
    <location>
        <begin position="43"/>
        <end position="56"/>
    </location>
</feature>